<name>REV_HV1J3</name>
<proteinExistence type="inferred from homology"/>
<dbReference type="EMBL" id="AH003604">
    <property type="protein sequence ID" value="AAB03525.1"/>
    <property type="molecule type" value="Genomic_RNA"/>
</dbReference>
<dbReference type="SMR" id="P12484"/>
<dbReference type="GO" id="GO:0030430">
    <property type="term" value="C:host cell cytoplasm"/>
    <property type="evidence" value="ECO:0007669"/>
    <property type="project" value="UniProtKB-SubCell"/>
</dbReference>
<dbReference type="GO" id="GO:0044196">
    <property type="term" value="C:host cell nucleolus"/>
    <property type="evidence" value="ECO:0007669"/>
    <property type="project" value="UniProtKB-SubCell"/>
</dbReference>
<dbReference type="GO" id="GO:0003700">
    <property type="term" value="F:DNA-binding transcription factor activity"/>
    <property type="evidence" value="ECO:0007669"/>
    <property type="project" value="InterPro"/>
</dbReference>
<dbReference type="GO" id="GO:0003723">
    <property type="term" value="F:RNA binding"/>
    <property type="evidence" value="ECO:0007669"/>
    <property type="project" value="UniProtKB-KW"/>
</dbReference>
<dbReference type="GO" id="GO:0051028">
    <property type="term" value="P:mRNA transport"/>
    <property type="evidence" value="ECO:0007669"/>
    <property type="project" value="UniProtKB-KW"/>
</dbReference>
<dbReference type="Gene3D" id="6.10.140.630">
    <property type="match status" value="1"/>
</dbReference>
<dbReference type="HAMAP" id="MF_04077">
    <property type="entry name" value="REV_HIV1"/>
    <property type="match status" value="1"/>
</dbReference>
<dbReference type="InterPro" id="IPR000625">
    <property type="entry name" value="REV_protein"/>
</dbReference>
<dbReference type="Pfam" id="PF00424">
    <property type="entry name" value="REV"/>
    <property type="match status" value="1"/>
</dbReference>
<sequence length="113" mass="13013">KKRRQRRRAAQAVRLIKFLYQSNPPPSPEGTRQARRNRRRRWRQRQRQIRSISGWIISNYLGRPAEPVPLQLPPLERLTLDCNEDCGTSGTQGVGSPQILVESPTILESGTKE</sequence>
<organism>
    <name type="scientific">Human immunodeficiency virus type 1 group M subtype B (isolate JH32)</name>
    <name type="common">HIV-1</name>
    <dbReference type="NCBI Taxonomy" id="11694"/>
    <lineage>
        <taxon>Viruses</taxon>
        <taxon>Riboviria</taxon>
        <taxon>Pararnavirae</taxon>
        <taxon>Artverviricota</taxon>
        <taxon>Revtraviricetes</taxon>
        <taxon>Ortervirales</taxon>
        <taxon>Retroviridae</taxon>
        <taxon>Orthoretrovirinae</taxon>
        <taxon>Lentivirus</taxon>
        <taxon>Human immunodeficiency virus type 1</taxon>
    </lineage>
</organism>
<evidence type="ECO:0000255" key="1">
    <source>
        <dbReference type="HAMAP-Rule" id="MF_04077"/>
    </source>
</evidence>
<evidence type="ECO:0000256" key="2">
    <source>
        <dbReference type="SAM" id="MobiDB-lite"/>
    </source>
</evidence>
<reference key="1">
    <citation type="journal article" date="1989" name="AIDS Res. Hum. Retroviruses">
        <title>Nucleotide sequences of gag and env genes of a Japanese isolate of HIV-1 and their expression in bacteria.</title>
        <authorList>
            <person name="Komiyama N."/>
            <person name="Hattori N."/>
            <person name="Inoue J."/>
            <person name="Sakuma S."/>
            <person name="Kurimura T."/>
            <person name="Yoshida M."/>
        </authorList>
    </citation>
    <scope>NUCLEOTIDE SEQUENCE [GENOMIC RNA]</scope>
</reference>
<reference key="2">
    <citation type="journal article" date="1999" name="Arch. Biochem. Biophys.">
        <title>The ins and outs of HIV Rev.</title>
        <authorList>
            <person name="Hope T.J."/>
        </authorList>
    </citation>
    <scope>REVIEW</scope>
</reference>
<accession>P12484</accession>
<organismHost>
    <name type="scientific">Homo sapiens</name>
    <name type="common">Human</name>
    <dbReference type="NCBI Taxonomy" id="9606"/>
</organismHost>
<comment type="function">
    <text evidence="1">Escorts unspliced or incompletely spliced viral pre-mRNAs (late transcripts) out of the nucleus of infected cells. These pre-mRNAs carry a recognition sequence called Rev responsive element (RRE) located in the env gene, that is not present in fully spliced viral mRNAs (early transcripts). This function is essential since most viral proteins are translated from unspliced or partially spliced pre-mRNAs which cannot exit the nucleus by the pathway used by fully processed cellular mRNAs. Rev itself is translated from a fully spliced mRNA that readily exits the nucleus. Rev's nuclear localization signal (NLS) binds directly to KPNB1/Importin beta-1 without previous binding to KPNA1/Importin alpha-1. KPNB1 binds to the GDP bound form of RAN (Ran-GDP) and targets Rev to the nucleus. In the nucleus, the conversion from Ran-GDP to Ran-GTP dissociates Rev from KPNB1 and allows Rev's binding to the RRE in viral pre-mRNAs. Rev multimerization on the RRE via cooperative assembly exposes its nuclear export signal (NES) to the surface. Rev can then form a complex with XPO1/CRM1 and Ran-GTP, leading to nuclear export of the complex. Conversion from Ran-GTP to Ran-GDP mediates dissociation of the Rev/RRE/XPO1/RAN complex, so that Rev can return to the nucleus for a subsequent round of export. Beside KPNB1, also seems to interact with TNPO1/Transportin-1, RANBP5/IPO5 and IPO7/RANBP7 for nuclear import. The nucleoporin-like HRB/RIP is an essential cofactor that probably indirectly interacts with Rev to release HIV RNAs from the perinuclear region to the cytoplasm.</text>
</comment>
<comment type="subunit">
    <text evidence="1">Homomultimer; when bound to the RRE. Multimeric assembly is essential for activity and may involve XPO1. Binds to human KPNB1, XPO1, TNPO1, RANBP5 and IPO7. Interacts with the viral Integrase. Interacts with human KHDRBS1. Interacts with human NAP1; this interaction decreases Rev multimerization and stimulates its activity. Interacts with human DEAD-box helicases DDX3 and DDX24; these interactions may serve for viral RNA export to the cytoplasm and packaging, respectively. Interacts with human PSIP1; this interaction may inhibit HIV-1 DNA integration by promoting dissociation of the Integrase-LEDGF/p75 complex.</text>
</comment>
<comment type="subcellular location">
    <subcellularLocation>
        <location evidence="1">Host nucleus</location>
        <location evidence="1">Host nucleolus</location>
    </subcellularLocation>
    <subcellularLocation>
        <location evidence="1">Host cytoplasm</location>
    </subcellularLocation>
    <text evidence="1">The presence of both nuclear import and nuclear export signals leads to continuous shuttling between the nucleus and cytoplasm.</text>
</comment>
<comment type="domain">
    <text evidence="1">The RNA-binding motif binds to the RRE, a 240 bp stem-and-loop structure present in incompletely spliced viral pre-mRNAs. This region also contains the NLS which mediates nuclear localization via KPNB1 binding and, when the N-terminal sequence is present, nucleolar targeting. These overlapping functions prevent Rev bound to RRE from undesirable return to the nucleus. When Rev binds the RRE, the NLS becomes masked while the NES remains accessible. The leucine-rich NES mediates binding to human XPO1.</text>
</comment>
<comment type="PTM">
    <text evidence="1">Asymmetrically arginine dimethylated at one site by host PRMT6. Methylation impairs the RNA-binding activity and export of viral RNA from the nucleus to the cytoplasm.</text>
</comment>
<comment type="PTM">
    <text evidence="1">Phosphorylated by protein kinase CK2. Presence of, and maybe binding to the N-terminus of the regulatory beta subunit of CK2 is necessary for CK2-mediated Rev's phosphorylation.</text>
</comment>
<comment type="miscellaneous">
    <text evidence="1">HIV-1 lineages are divided in three main groups, M (for Major), O (for Outlier), and N (for New, or Non-M, Non-O). The vast majority of strains found worldwide belong to the group M. Group O seems to be endemic to and largely confined to Cameroon and neighboring countries in West Central Africa, where these viruses represent a small minority of HIV-1 strains. The group N is represented by a limited number of isolates from Cameroonian persons. The group M is further subdivided in 9 clades or subtypes (A to D, F to H, J and K).</text>
</comment>
<comment type="similarity">
    <text evidence="1">Belongs to the HIV-1 REV protein family.</text>
</comment>
<feature type="chain" id="PRO_0000085269" description="Protein Rev">
    <location>
        <begin position="1" status="less than"/>
        <end position="113"/>
    </location>
</feature>
<feature type="region of interest" description="Homomultimerization" evidence="1">
    <location>
        <begin position="15"/>
        <end position="23"/>
    </location>
</feature>
<feature type="region of interest" description="Disordered" evidence="2">
    <location>
        <begin position="17"/>
        <end position="45"/>
    </location>
</feature>
<feature type="region of interest" description="Disordered" evidence="2">
    <location>
        <begin position="89"/>
        <end position="113"/>
    </location>
</feature>
<feature type="short sequence motif" description="Nuclear localization signal and RNA-binding (RRE)" evidence="1">
    <location>
        <begin position="31"/>
        <end position="47"/>
    </location>
</feature>
<feature type="short sequence motif" description="Nuclear export signal and binding to XPO1" evidence="1">
    <location>
        <begin position="70"/>
        <end position="81"/>
    </location>
</feature>
<feature type="compositionally biased region" description="Basic residues" evidence="2">
    <location>
        <begin position="33"/>
        <end position="45"/>
    </location>
</feature>
<feature type="modified residue" description="Phosphoserine; by host" evidence="1">
    <location>
        <position position="89"/>
    </location>
</feature>
<feature type="modified residue" description="Phosphoserine; by host" evidence="1">
    <location>
        <position position="96"/>
    </location>
</feature>
<feature type="non-terminal residue">
    <location>
        <position position="1"/>
    </location>
</feature>
<protein>
    <recommendedName>
        <fullName evidence="1">Protein Rev</fullName>
    </recommendedName>
    <alternativeName>
        <fullName evidence="1">ART/TRS</fullName>
    </alternativeName>
    <alternativeName>
        <fullName evidence="1">Anti-repression transactivator</fullName>
    </alternativeName>
    <alternativeName>
        <fullName evidence="1">Regulator of expression of viral proteins</fullName>
    </alternativeName>
</protein>
<keyword id="KW-0014">AIDS</keyword>
<keyword id="KW-1035">Host cytoplasm</keyword>
<keyword id="KW-1048">Host nucleus</keyword>
<keyword id="KW-0945">Host-virus interaction</keyword>
<keyword id="KW-0488">Methylation</keyword>
<keyword id="KW-0509">mRNA transport</keyword>
<keyword id="KW-0597">Phosphoprotein</keyword>
<keyword id="KW-0694">RNA-binding</keyword>
<keyword id="KW-0813">Transport</keyword>
<gene>
    <name evidence="1" type="primary">rev</name>
</gene>